<proteinExistence type="inferred from homology"/>
<organism>
    <name type="scientific">Trifolium subterraneum</name>
    <name type="common">Subterranean clover</name>
    <dbReference type="NCBI Taxonomy" id="3900"/>
    <lineage>
        <taxon>Eukaryota</taxon>
        <taxon>Viridiplantae</taxon>
        <taxon>Streptophyta</taxon>
        <taxon>Embryophyta</taxon>
        <taxon>Tracheophyta</taxon>
        <taxon>Spermatophyta</taxon>
        <taxon>Magnoliopsida</taxon>
        <taxon>eudicotyledons</taxon>
        <taxon>Gunneridae</taxon>
        <taxon>Pentapetalae</taxon>
        <taxon>rosids</taxon>
        <taxon>fabids</taxon>
        <taxon>Fabales</taxon>
        <taxon>Fabaceae</taxon>
        <taxon>Papilionoideae</taxon>
        <taxon>50 kb inversion clade</taxon>
        <taxon>NPAAA clade</taxon>
        <taxon>Hologalegina</taxon>
        <taxon>IRL clade</taxon>
        <taxon>Trifolieae</taxon>
        <taxon>Trifolium</taxon>
    </lineage>
</organism>
<gene>
    <name type="primary">PAL1</name>
</gene>
<keyword id="KW-0963">Cytoplasm</keyword>
<keyword id="KW-0456">Lyase</keyword>
<keyword id="KW-0585">Phenylalanine catabolism</keyword>
<keyword id="KW-0587">Phenylpropanoid metabolism</keyword>
<reference key="1">
    <citation type="journal article" date="1994" name="Gene">
        <title>Characterization of a phenylalanine ammonia-lyase multigene family in Trifolium subterraneum.</title>
        <authorList>
            <person name="Howles P.A."/>
            <person name="Arioli T."/>
            <person name="Weinman J.J."/>
        </authorList>
    </citation>
    <scope>NUCLEOTIDE SEQUENCE</scope>
    <source>
        <strain>cv. Karridale</strain>
        <tissue>Leaf</tissue>
    </source>
</reference>
<accession>P45734</accession>
<dbReference type="EC" id="4.3.1.24" evidence="2"/>
<dbReference type="EMBL" id="M91192">
    <property type="protein sequence ID" value="AAA17993.1"/>
    <property type="molecule type" value="Unassigned_DNA"/>
</dbReference>
<dbReference type="SMR" id="P45734"/>
<dbReference type="UniPathway" id="UPA00713">
    <property type="reaction ID" value="UER00725"/>
</dbReference>
<dbReference type="GO" id="GO:0005737">
    <property type="term" value="C:cytoplasm"/>
    <property type="evidence" value="ECO:0007669"/>
    <property type="project" value="UniProtKB-SubCell"/>
</dbReference>
<dbReference type="GO" id="GO:0045548">
    <property type="term" value="F:phenylalanine ammonia-lyase activity"/>
    <property type="evidence" value="ECO:0007669"/>
    <property type="project" value="UniProtKB-EC"/>
</dbReference>
<dbReference type="GO" id="GO:0009800">
    <property type="term" value="P:cinnamic acid biosynthetic process"/>
    <property type="evidence" value="ECO:0007669"/>
    <property type="project" value="UniProtKB-UniPathway"/>
</dbReference>
<dbReference type="GO" id="GO:0006559">
    <property type="term" value="P:L-phenylalanine catabolic process"/>
    <property type="evidence" value="ECO:0007669"/>
    <property type="project" value="UniProtKB-KW"/>
</dbReference>
<dbReference type="CDD" id="cd00332">
    <property type="entry name" value="PAL-HAL"/>
    <property type="match status" value="1"/>
</dbReference>
<dbReference type="FunFam" id="1.10.274.20:FF:000001">
    <property type="entry name" value="Phenylalanine ammonia-lyase"/>
    <property type="match status" value="1"/>
</dbReference>
<dbReference type="FunFam" id="1.10.275.10:FF:000009">
    <property type="entry name" value="Phenylalanine ammonia-lyase"/>
    <property type="match status" value="1"/>
</dbReference>
<dbReference type="FunFam" id="1.20.200.10:FF:000009">
    <property type="entry name" value="Phenylalanine ammonia-lyase"/>
    <property type="match status" value="1"/>
</dbReference>
<dbReference type="Gene3D" id="1.20.200.10">
    <property type="entry name" value="Fumarase/aspartase (Central domain)"/>
    <property type="match status" value="1"/>
</dbReference>
<dbReference type="Gene3D" id="1.10.275.10">
    <property type="entry name" value="Fumarase/aspartase (N-terminal domain)"/>
    <property type="match status" value="1"/>
</dbReference>
<dbReference type="Gene3D" id="1.10.274.20">
    <property type="entry name" value="Phenylalanine ammonia-lyase 1, domain 3"/>
    <property type="match status" value="1"/>
</dbReference>
<dbReference type="InterPro" id="IPR001106">
    <property type="entry name" value="Aromatic_Lyase"/>
</dbReference>
<dbReference type="InterPro" id="IPR024083">
    <property type="entry name" value="Fumarase/histidase_N"/>
</dbReference>
<dbReference type="InterPro" id="IPR008948">
    <property type="entry name" value="L-Aspartase-like"/>
</dbReference>
<dbReference type="InterPro" id="IPR022313">
    <property type="entry name" value="Phe/His_NH3-lyase_AS"/>
</dbReference>
<dbReference type="InterPro" id="IPR005922">
    <property type="entry name" value="Phe_NH3-lyase"/>
</dbReference>
<dbReference type="InterPro" id="IPR023144">
    <property type="entry name" value="Phe_NH3-lyase_shielding_dom_sf"/>
</dbReference>
<dbReference type="NCBIfam" id="TIGR01226">
    <property type="entry name" value="phe_am_lyase"/>
    <property type="match status" value="1"/>
</dbReference>
<dbReference type="PANTHER" id="PTHR10362">
    <property type="entry name" value="HISTIDINE AMMONIA-LYASE"/>
    <property type="match status" value="1"/>
</dbReference>
<dbReference type="Pfam" id="PF00221">
    <property type="entry name" value="Lyase_aromatic"/>
    <property type="match status" value="1"/>
</dbReference>
<dbReference type="SUPFAM" id="SSF48557">
    <property type="entry name" value="L-aspartase-like"/>
    <property type="match status" value="1"/>
</dbReference>
<dbReference type="PROSITE" id="PS00488">
    <property type="entry name" value="PAL_HISTIDASE"/>
    <property type="match status" value="1"/>
</dbReference>
<protein>
    <recommendedName>
        <fullName>Phenylalanine ammonia-lyase</fullName>
        <ecNumber evidence="2">4.3.1.24</ecNumber>
    </recommendedName>
</protein>
<name>PALY_TRISU</name>
<sequence length="725" mass="78998">MEVVAAAILKNNINDYDSFCLTHANANNMKVNAADPLNWGVAAEAMKGSHLDEVKRMVEEYRKPVVRLGGETLTISQVAAIAAHDGATVELSESARAGVKASSDWVMESMNKGTDSYGVTTGFGATSHRRTKQGGALQKELIRFLNAGIFGNGTESNHTLPHTATRAAMLVRINTLLQGYSGIRFEILEAITKLLNNNITPCLPLRGTITASGDLVPLSYIAGLLTGRSNSKAHGPSGEMLNAKEAFQLAGINAEFFELQPKEGLALVNGTAVGSGLASIVLFEANILAVLSEVLSAIFAEVMQGKPEFTDHLTHKLKHHPGQIEAAAIMEHILHGSAYVKDAKKLHEMDPLQKPKQDRYALRTSPQWLGPLIEVIRFSTKSIEREINSVNDNPLIDVSRNKALHGGNFQGTPIGVSMDNTRLALASIGKLLFAQFSELVNDFYNNGLPSNLSASRNPSLDYGFKGSEIAMASYCSELQYLANPVTTHVQSAEQHNQDVNSLGLISSRKTKEAIEILQLMSSTFLIALCQAIDLRHLEENLKNSVKNTVSQVAKKTLTIGVSGELHPSRFCEKDLLKVVDREHVFSYIDDPCSATYPLAQKLRQVLVDHALVNGESEKNSNTSIFQKIATFEEELKTLLPKEVESARTAYENGNSTIANKINGCRSYPLYKFVREELGTSLLTGERVISPGEECDKLFTAMCQGKIIDPLLKCLGEWNGAPLPIC</sequence>
<comment type="function">
    <text evidence="2">This is a key enzyme of plant metabolism catalyzing the first reaction in the biosynthesis from L-phenylalanine of a wide variety of natural products based on the phenylpropane skeleton.</text>
</comment>
<comment type="catalytic activity">
    <reaction evidence="2">
        <text>L-phenylalanine = (E)-cinnamate + NH4(+)</text>
        <dbReference type="Rhea" id="RHEA:21384"/>
        <dbReference type="ChEBI" id="CHEBI:15669"/>
        <dbReference type="ChEBI" id="CHEBI:28938"/>
        <dbReference type="ChEBI" id="CHEBI:58095"/>
        <dbReference type="EC" id="4.3.1.24"/>
    </reaction>
</comment>
<comment type="pathway">
    <text evidence="5">Phenylpropanoid metabolism; trans-cinnamate biosynthesis; trans-cinnamate from L-phenylalanine: step 1/1.</text>
</comment>
<comment type="subunit">
    <text evidence="2">Homotetramer.</text>
</comment>
<comment type="subcellular location">
    <subcellularLocation>
        <location evidence="5">Cytoplasm</location>
    </subcellularLocation>
</comment>
<comment type="PTM">
    <text evidence="3">Contains an active site 4-methylidene-imidazol-5-one (MIO), which is formed autocatalytically by cyclization and dehydration of residues Ala-Ser-Gly.</text>
</comment>
<comment type="similarity">
    <text evidence="5">Belongs to the PAL/histidase family.</text>
</comment>
<evidence type="ECO:0000250" key="1">
    <source>
        <dbReference type="UniProtKB" id="P11544"/>
    </source>
</evidence>
<evidence type="ECO:0000250" key="2">
    <source>
        <dbReference type="UniProtKB" id="P24481"/>
    </source>
</evidence>
<evidence type="ECO:0000250" key="3">
    <source>
        <dbReference type="UniProtKB" id="Q68G84"/>
    </source>
</evidence>
<evidence type="ECO:0000255" key="4">
    <source>
        <dbReference type="PROSITE-ProRule" id="PRU10122"/>
    </source>
</evidence>
<evidence type="ECO:0000305" key="5"/>
<feature type="chain" id="PRO_0000215426" description="Phenylalanine ammonia-lyase">
    <location>
        <begin position="1"/>
        <end position="725"/>
    </location>
</feature>
<feature type="active site" description="Proton donor/acceptor" evidence="3">
    <location>
        <position position="117"/>
    </location>
</feature>
<feature type="binding site" evidence="3">
    <location>
        <position position="269"/>
    </location>
    <ligand>
        <name>(E)-cinnamate</name>
        <dbReference type="ChEBI" id="CHEBI:15669"/>
    </ligand>
</feature>
<feature type="binding site" evidence="3">
    <location>
        <position position="357"/>
    </location>
    <ligand>
        <name>(E)-cinnamate</name>
        <dbReference type="ChEBI" id="CHEBI:15669"/>
    </ligand>
</feature>
<feature type="binding site" evidence="3">
    <location>
        <position position="363"/>
    </location>
    <ligand>
        <name>(E)-cinnamate</name>
        <dbReference type="ChEBI" id="CHEBI:15669"/>
    </ligand>
</feature>
<feature type="binding site" evidence="3">
    <location>
        <position position="393"/>
    </location>
    <ligand>
        <name>(E)-cinnamate</name>
        <dbReference type="ChEBI" id="CHEBI:15669"/>
    </ligand>
</feature>
<feature type="binding site" evidence="1">
    <location>
        <position position="465"/>
    </location>
    <ligand>
        <name>(E)-cinnamate</name>
        <dbReference type="ChEBI" id="CHEBI:15669"/>
    </ligand>
</feature>
<feature type="binding site" evidence="1">
    <location>
        <position position="493"/>
    </location>
    <ligand>
        <name>(E)-cinnamate</name>
        <dbReference type="ChEBI" id="CHEBI:15669"/>
    </ligand>
</feature>
<feature type="binding site" evidence="3">
    <location>
        <position position="496"/>
    </location>
    <ligand>
        <name>(E)-cinnamate</name>
        <dbReference type="ChEBI" id="CHEBI:15669"/>
    </ligand>
</feature>
<feature type="modified residue" description="2,3-didehydroalanine (Ser)" evidence="4">
    <location>
        <position position="212"/>
    </location>
</feature>
<feature type="cross-link" description="5-imidazolinone (Ala-Gly)" evidence="3">
    <location>
        <begin position="211"/>
        <end position="213"/>
    </location>
</feature>